<comment type="function">
    <text evidence="3">Plays a pivotal role in hepatic lipid metabolism. In vitro, it catalyzes the oxidation of a variety of lipid substrates, including 17beta-estradiol, retinol, retinal, and leukotriene B4.</text>
</comment>
<comment type="catalytic activity">
    <reaction evidence="3">
        <text>17beta-estradiol + NAD(+) = estrone + NADH + H(+)</text>
        <dbReference type="Rhea" id="RHEA:24612"/>
        <dbReference type="ChEBI" id="CHEBI:15378"/>
        <dbReference type="ChEBI" id="CHEBI:16469"/>
        <dbReference type="ChEBI" id="CHEBI:17263"/>
        <dbReference type="ChEBI" id="CHEBI:57540"/>
        <dbReference type="ChEBI" id="CHEBI:57945"/>
        <dbReference type="EC" id="1.1.1.62"/>
    </reaction>
</comment>
<comment type="catalytic activity">
    <reaction evidence="3">
        <text>all-trans-retinol + NAD(+) = all-trans-retinal + NADH + H(+)</text>
        <dbReference type="Rhea" id="RHEA:21284"/>
        <dbReference type="ChEBI" id="CHEBI:15378"/>
        <dbReference type="ChEBI" id="CHEBI:17336"/>
        <dbReference type="ChEBI" id="CHEBI:17898"/>
        <dbReference type="ChEBI" id="CHEBI:57540"/>
        <dbReference type="ChEBI" id="CHEBI:57945"/>
        <dbReference type="EC" id="1.1.1.105"/>
    </reaction>
</comment>
<comment type="catalytic activity">
    <reaction evidence="3">
        <text>all-trans-retinal + NAD(+) + H2O = all-trans-retinoate + NADH + 2 H(+)</text>
        <dbReference type="Rhea" id="RHEA:42080"/>
        <dbReference type="ChEBI" id="CHEBI:15377"/>
        <dbReference type="ChEBI" id="CHEBI:15378"/>
        <dbReference type="ChEBI" id="CHEBI:17898"/>
        <dbReference type="ChEBI" id="CHEBI:35291"/>
        <dbReference type="ChEBI" id="CHEBI:57540"/>
        <dbReference type="ChEBI" id="CHEBI:57945"/>
    </reaction>
</comment>
<comment type="subcellular location">
    <subcellularLocation>
        <location evidence="3">Lipid droplet</location>
    </subcellularLocation>
    <subcellularLocation>
        <location evidence="10">Endoplasmic reticulum</location>
    </subcellularLocation>
    <subcellularLocation>
        <location evidence="6">Lipid droplet</location>
    </subcellularLocation>
    <text evidence="6">Redistributed from the endoplasmic reticulum to lipids droplets in the cell upon induction of lipids droplet formation.</text>
</comment>
<comment type="alternative products">
    <event type="alternative splicing"/>
    <isoform>
        <id>Q8VCR2-1</id>
        <name>1</name>
        <sequence type="displayed"/>
    </isoform>
    <isoform>
        <id>Q8VCR2-2</id>
        <name>2</name>
        <sequence type="described" ref="VSP_015861"/>
    </isoform>
</comment>
<comment type="tissue specificity">
    <text evidence="6">Expressed predominantly in the liver (at protein level).</text>
</comment>
<comment type="similarity">
    <text evidence="9">Belongs to the short-chain dehydrogenases/reductases (SDR) family.</text>
</comment>
<dbReference type="EC" id="1.1.1.-" evidence="3"/>
<dbReference type="EC" id="1.1.1.62" evidence="3"/>
<dbReference type="EC" id="1.1.1.105" evidence="3"/>
<dbReference type="EMBL" id="AY101768">
    <property type="protein sequence ID" value="AAM51176.1"/>
    <property type="molecule type" value="mRNA"/>
</dbReference>
<dbReference type="EMBL" id="AL714024">
    <property type="status" value="NOT_ANNOTATED_CDS"/>
    <property type="molecule type" value="Genomic_DNA"/>
</dbReference>
<dbReference type="EMBL" id="CH466529">
    <property type="protein sequence ID" value="EDL20237.1"/>
    <property type="molecule type" value="Genomic_DNA"/>
</dbReference>
<dbReference type="EMBL" id="BC019427">
    <property type="protein sequence ID" value="AAH19427.1"/>
    <property type="molecule type" value="mRNA"/>
</dbReference>
<dbReference type="CCDS" id="CCDS19480.1">
    <molecule id="Q8VCR2-1"/>
</dbReference>
<dbReference type="CCDS" id="CCDS51576.1">
    <molecule id="Q8VCR2-2"/>
</dbReference>
<dbReference type="RefSeq" id="NP_001156958.1">
    <molecule id="Q8VCR2-2"/>
    <property type="nucleotide sequence ID" value="NM_001163486.1"/>
</dbReference>
<dbReference type="RefSeq" id="NP_932147.2">
    <molecule id="Q8VCR2-1"/>
    <property type="nucleotide sequence ID" value="NM_198030.2"/>
</dbReference>
<dbReference type="SMR" id="Q8VCR2"/>
<dbReference type="FunCoup" id="Q8VCR2">
    <property type="interactions" value="86"/>
</dbReference>
<dbReference type="IntAct" id="Q8VCR2">
    <property type="interactions" value="1"/>
</dbReference>
<dbReference type="STRING" id="10090.ENSMUSP00000046772"/>
<dbReference type="BindingDB" id="Q8VCR2"/>
<dbReference type="ChEMBL" id="CHEMBL5305044"/>
<dbReference type="GlyGen" id="Q8VCR2">
    <property type="glycosylation" value="2 sites, 1 O-linked glycan (1 site)"/>
</dbReference>
<dbReference type="iPTMnet" id="Q8VCR2"/>
<dbReference type="PhosphoSitePlus" id="Q8VCR2"/>
<dbReference type="SwissPalm" id="Q8VCR2"/>
<dbReference type="jPOST" id="Q8VCR2"/>
<dbReference type="PaxDb" id="10090-ENSMUSP00000046772"/>
<dbReference type="PeptideAtlas" id="Q8VCR2"/>
<dbReference type="ProteomicsDB" id="277326">
    <molecule id="Q8VCR2-1"/>
</dbReference>
<dbReference type="ProteomicsDB" id="277327">
    <molecule id="Q8VCR2-2"/>
</dbReference>
<dbReference type="Antibodypedia" id="25413">
    <property type="antibodies" value="177 antibodies from 25 providers"/>
</dbReference>
<dbReference type="DNASU" id="243168"/>
<dbReference type="Ensembl" id="ENSMUST00000048118.15">
    <molecule id="Q8VCR2-1"/>
    <property type="protein sequence ID" value="ENSMUSP00000046772.9"/>
    <property type="gene ID" value="ENSMUSG00000034528.16"/>
</dbReference>
<dbReference type="Ensembl" id="ENSMUST00000112803.3">
    <molecule id="Q8VCR2-2"/>
    <property type="protein sequence ID" value="ENSMUSP00000108422.3"/>
    <property type="gene ID" value="ENSMUSG00000034528.16"/>
</dbReference>
<dbReference type="GeneID" id="243168"/>
<dbReference type="KEGG" id="mmu:243168"/>
<dbReference type="UCSC" id="uc008yjw.2">
    <molecule id="Q8VCR2-1"/>
    <property type="organism name" value="mouse"/>
</dbReference>
<dbReference type="UCSC" id="uc008yjx.2">
    <molecule id="Q8VCR2-2"/>
    <property type="organism name" value="mouse"/>
</dbReference>
<dbReference type="AGR" id="MGI:2140804"/>
<dbReference type="CTD" id="345275"/>
<dbReference type="MGI" id="MGI:2140804">
    <property type="gene designation" value="Hsd17b13"/>
</dbReference>
<dbReference type="VEuPathDB" id="HostDB:ENSMUSG00000034528"/>
<dbReference type="eggNOG" id="KOG1201">
    <property type="taxonomic scope" value="Eukaryota"/>
</dbReference>
<dbReference type="GeneTree" id="ENSGT00940000161743"/>
<dbReference type="InParanoid" id="Q8VCR2"/>
<dbReference type="OMA" id="RWTAYEF"/>
<dbReference type="OrthoDB" id="10253736at2759"/>
<dbReference type="PhylomeDB" id="Q8VCR2"/>
<dbReference type="TreeFam" id="TF312837"/>
<dbReference type="Reactome" id="R-MMU-8964572">
    <property type="pathway name" value="Lipid particle organization"/>
</dbReference>
<dbReference type="BioGRID-ORCS" id="243168">
    <property type="hits" value="2 hits in 79 CRISPR screens"/>
</dbReference>
<dbReference type="ChiTaRS" id="Hsd17b13">
    <property type="organism name" value="mouse"/>
</dbReference>
<dbReference type="PRO" id="PR:Q8VCR2"/>
<dbReference type="Proteomes" id="UP000000589">
    <property type="component" value="Chromosome 5"/>
</dbReference>
<dbReference type="RNAct" id="Q8VCR2">
    <property type="molecule type" value="protein"/>
</dbReference>
<dbReference type="Bgee" id="ENSMUSG00000034528">
    <property type="expression patterns" value="Expressed in left lobe of liver and 31 other cell types or tissues"/>
</dbReference>
<dbReference type="ExpressionAtlas" id="Q8VCR2">
    <property type="expression patterns" value="baseline and differential"/>
</dbReference>
<dbReference type="GO" id="GO:0005783">
    <property type="term" value="C:endoplasmic reticulum"/>
    <property type="evidence" value="ECO:0007669"/>
    <property type="project" value="UniProtKB-SubCell"/>
</dbReference>
<dbReference type="GO" id="GO:0005811">
    <property type="term" value="C:lipid droplet"/>
    <property type="evidence" value="ECO:0000314"/>
    <property type="project" value="UniProtKB"/>
</dbReference>
<dbReference type="GO" id="GO:0004745">
    <property type="term" value="F:all-trans-retinol dehydrogenase (NAD+) activity"/>
    <property type="evidence" value="ECO:0007669"/>
    <property type="project" value="RHEA"/>
</dbReference>
<dbReference type="GO" id="GO:0004303">
    <property type="term" value="F:estradiol 17-beta-dehydrogenase [NAD(P)+] activity"/>
    <property type="evidence" value="ECO:0007669"/>
    <property type="project" value="RHEA"/>
</dbReference>
<dbReference type="GO" id="GO:0006629">
    <property type="term" value="P:lipid metabolic process"/>
    <property type="evidence" value="ECO:0007669"/>
    <property type="project" value="UniProtKB-KW"/>
</dbReference>
<dbReference type="GO" id="GO:0046889">
    <property type="term" value="P:positive regulation of lipid biosynthetic process"/>
    <property type="evidence" value="ECO:0000266"/>
    <property type="project" value="MGI"/>
</dbReference>
<dbReference type="CDD" id="cd05339">
    <property type="entry name" value="17beta-HSDXI-like_SDR_c"/>
    <property type="match status" value="1"/>
</dbReference>
<dbReference type="FunFam" id="3.40.50.720:FF:000224">
    <property type="entry name" value="Hydroxysteroid 17-beta dehydrogenase 11"/>
    <property type="match status" value="1"/>
</dbReference>
<dbReference type="Gene3D" id="3.40.50.720">
    <property type="entry name" value="NAD(P)-binding Rossmann-like Domain"/>
    <property type="match status" value="1"/>
</dbReference>
<dbReference type="InterPro" id="IPR036291">
    <property type="entry name" value="NAD(P)-bd_dom_sf"/>
</dbReference>
<dbReference type="InterPro" id="IPR002347">
    <property type="entry name" value="SDR_fam"/>
</dbReference>
<dbReference type="PANTHER" id="PTHR24322:SF499">
    <property type="entry name" value="17-BETA-HYDROXYSTEROID DEHYDROGENASE 13"/>
    <property type="match status" value="1"/>
</dbReference>
<dbReference type="PANTHER" id="PTHR24322">
    <property type="entry name" value="PKSB"/>
    <property type="match status" value="1"/>
</dbReference>
<dbReference type="Pfam" id="PF00106">
    <property type="entry name" value="adh_short"/>
    <property type="match status" value="1"/>
</dbReference>
<dbReference type="PRINTS" id="PR00081">
    <property type="entry name" value="GDHRDH"/>
</dbReference>
<dbReference type="PRINTS" id="PR00080">
    <property type="entry name" value="SDRFAMILY"/>
</dbReference>
<dbReference type="SUPFAM" id="SSF51735">
    <property type="entry name" value="NAD(P)-binding Rossmann-fold domains"/>
    <property type="match status" value="1"/>
</dbReference>
<feature type="signal peptide" evidence="4">
    <location>
        <begin position="1"/>
        <end position="19"/>
    </location>
</feature>
<feature type="chain" id="PRO_0000042584" description="17-beta-hydroxysteroid dehydrogenase 13">
    <location>
        <begin position="20"/>
        <end position="304"/>
    </location>
</feature>
<feature type="region of interest" description="Disordered" evidence="5">
    <location>
        <begin position="276"/>
        <end position="304"/>
    </location>
</feature>
<feature type="active site" description="Proton acceptor" evidence="1">
    <location>
        <position position="185"/>
    </location>
</feature>
<feature type="binding site" evidence="1">
    <location>
        <begin position="40"/>
        <end position="67"/>
    </location>
    <ligand>
        <name>NAD(+)</name>
        <dbReference type="ChEBI" id="CHEBI:57540"/>
    </ligand>
</feature>
<feature type="binding site" evidence="1">
    <location>
        <position position="172"/>
    </location>
    <ligand>
        <name>substrate</name>
    </ligand>
</feature>
<feature type="binding site" evidence="1">
    <location>
        <position position="189"/>
    </location>
    <ligand>
        <name>NAD(+)</name>
        <dbReference type="ChEBI" id="CHEBI:57540"/>
    </ligand>
</feature>
<feature type="modified residue" description="Phosphoserine" evidence="2">
    <location>
        <position position="33"/>
    </location>
</feature>
<feature type="modified residue" description="N6-acetyllysine" evidence="11">
    <location>
        <position position="79"/>
    </location>
</feature>
<feature type="splice variant" id="VSP_015861" description="In isoform 2." evidence="8">
    <original>GPGFSSKHPHGGSQQPVTPIPGDLTPSSDFLKH</original>
    <variation>FLPERALKAISRIQNIQFEAIVGHKTKMK</variation>
    <location>
        <begin position="272"/>
        <end position="304"/>
    </location>
</feature>
<feature type="sequence conflict" description="In Ref. 4; AAH19427." evidence="9" ref="4">
    <original>Q</original>
    <variation>K</variation>
    <location>
        <position position="212"/>
    </location>
</feature>
<feature type="sequence conflict" description="In Ref. 4; AAH19427." evidence="9" ref="4">
    <original>S</original>
    <variation>F</variation>
    <location>
        <position position="266"/>
    </location>
</feature>
<sequence length="304" mass="33458">MNLILEFLLLVGVIIYSYLESLVKFFIPRRRKSVTGQTVLITGAGHGIGRLTAYEFAKQKSRLVLWDINKRGVEETADKCRKLGAVVHVFVVDCSNRAEIYNSVDQVKREVGDVEIVVNNAGAIYPADLLSAKDEEITKTFEVNILGHFWIIKALLPSMLRRNSGHIVTVASVCGHGVIPYLIPYCSSKFAAVGFHRALTAELDTLGKTGIQTSCLCPVFVNTGFTKNPSTRLWPVLEPEEVARSLINGILTNKKMIFVPSYINISLILEKGPGFSSKHPHGGSQQPVTPIPGDLTPSSDFLKH</sequence>
<organism>
    <name type="scientific">Mus musculus</name>
    <name type="common">Mouse</name>
    <dbReference type="NCBI Taxonomy" id="10090"/>
    <lineage>
        <taxon>Eukaryota</taxon>
        <taxon>Metazoa</taxon>
        <taxon>Chordata</taxon>
        <taxon>Craniata</taxon>
        <taxon>Vertebrata</taxon>
        <taxon>Euteleostomi</taxon>
        <taxon>Mammalia</taxon>
        <taxon>Eutheria</taxon>
        <taxon>Euarchontoglires</taxon>
        <taxon>Glires</taxon>
        <taxon>Rodentia</taxon>
        <taxon>Myomorpha</taxon>
        <taxon>Muroidea</taxon>
        <taxon>Muridae</taxon>
        <taxon>Murinae</taxon>
        <taxon>Mus</taxon>
        <taxon>Mus</taxon>
    </lineage>
</organism>
<reference key="1">
    <citation type="submission" date="2002-05" db="EMBL/GenBank/DDBJ databases">
        <authorList>
            <person name="Oliver P.L."/>
            <person name="Isaacs A.M."/>
            <person name="Davies K.E."/>
        </authorList>
    </citation>
    <scope>NUCLEOTIDE SEQUENCE [MRNA] (ISOFORM 2)</scope>
    <source>
        <strain>BALB/cJ</strain>
    </source>
</reference>
<reference key="2">
    <citation type="journal article" date="2009" name="PLoS Biol.">
        <title>Lineage-specific biology revealed by a finished genome assembly of the mouse.</title>
        <authorList>
            <person name="Church D.M."/>
            <person name="Goodstadt L."/>
            <person name="Hillier L.W."/>
            <person name="Zody M.C."/>
            <person name="Goldstein S."/>
            <person name="She X."/>
            <person name="Bult C.J."/>
            <person name="Agarwala R."/>
            <person name="Cherry J.L."/>
            <person name="DiCuccio M."/>
            <person name="Hlavina W."/>
            <person name="Kapustin Y."/>
            <person name="Meric P."/>
            <person name="Maglott D."/>
            <person name="Birtle Z."/>
            <person name="Marques A.C."/>
            <person name="Graves T."/>
            <person name="Zhou S."/>
            <person name="Teague B."/>
            <person name="Potamousis K."/>
            <person name="Churas C."/>
            <person name="Place M."/>
            <person name="Herschleb J."/>
            <person name="Runnheim R."/>
            <person name="Forrest D."/>
            <person name="Amos-Landgraf J."/>
            <person name="Schwartz D.C."/>
            <person name="Cheng Z."/>
            <person name="Lindblad-Toh K."/>
            <person name="Eichler E.E."/>
            <person name="Ponting C.P."/>
        </authorList>
    </citation>
    <scope>NUCLEOTIDE SEQUENCE [LARGE SCALE GENOMIC DNA]</scope>
    <source>
        <strain>C57BL/6J</strain>
    </source>
</reference>
<reference key="3">
    <citation type="submission" date="2005-07" db="EMBL/GenBank/DDBJ databases">
        <authorList>
            <person name="Mural R.J."/>
            <person name="Adams M.D."/>
            <person name="Myers E.W."/>
            <person name="Smith H.O."/>
            <person name="Venter J.C."/>
        </authorList>
    </citation>
    <scope>NUCLEOTIDE SEQUENCE [LARGE SCALE GENOMIC DNA]</scope>
</reference>
<reference key="4">
    <citation type="journal article" date="2004" name="Genome Res.">
        <title>The status, quality, and expansion of the NIH full-length cDNA project: the Mammalian Gene Collection (MGC).</title>
        <authorList>
            <consortium name="The MGC Project Team"/>
        </authorList>
    </citation>
    <scope>NUCLEOTIDE SEQUENCE [LARGE SCALE MRNA] (ISOFORM 1)</scope>
    <source>
        <strain>FVB/N</strain>
        <tissue>Liver</tissue>
    </source>
</reference>
<reference key="5">
    <citation type="journal article" date="2007" name="Proc. Natl. Acad. Sci. U.S.A.">
        <title>Large-scale phosphorylation analysis of mouse liver.</title>
        <authorList>
            <person name="Villen J."/>
            <person name="Beausoleil S.A."/>
            <person name="Gerber S.A."/>
            <person name="Gygi S.P."/>
        </authorList>
    </citation>
    <scope>IDENTIFICATION BY MASS SPECTROMETRY [LARGE SCALE ANALYSIS]</scope>
    <source>
        <tissue>Liver</tissue>
    </source>
</reference>
<reference key="6">
    <citation type="journal article" date="2008" name="Biochem. Biophys. Res. Commun.">
        <title>17beta-Hydroxysteroid dehydrogenase type 13 is a liver-specific lipid droplet-associated protein.</title>
        <authorList>
            <person name="Horiguchi Y."/>
            <person name="Araki M."/>
            <person name="Motojima K."/>
        </authorList>
    </citation>
    <scope>SUBCELLULAR LOCATION</scope>
    <scope>TISSUE SPECIFICITY</scope>
</reference>
<reference key="7">
    <citation type="journal article" date="2010" name="Cell">
        <title>A tissue-specific atlas of mouse protein phosphorylation and expression.</title>
        <authorList>
            <person name="Huttlin E.L."/>
            <person name="Jedrychowski M.P."/>
            <person name="Elias J.E."/>
            <person name="Goswami T."/>
            <person name="Rad R."/>
            <person name="Beausoleil S.A."/>
            <person name="Villen J."/>
            <person name="Haas W."/>
            <person name="Sowa M.E."/>
            <person name="Gygi S.P."/>
        </authorList>
    </citation>
    <scope>IDENTIFICATION BY MASS SPECTROMETRY [LARGE SCALE ANALYSIS]</scope>
    <source>
        <tissue>Liver</tissue>
        <tissue>Pancreas</tissue>
    </source>
</reference>
<reference key="8">
    <citation type="journal article" date="2013" name="Proc. Natl. Acad. Sci. U.S.A.">
        <title>Label-free quantitative proteomics of the lysine acetylome in mitochondria identifies substrates of SIRT3 in metabolic pathways.</title>
        <authorList>
            <person name="Rardin M.J."/>
            <person name="Newman J.C."/>
            <person name="Held J.M."/>
            <person name="Cusack M.P."/>
            <person name="Sorensen D.J."/>
            <person name="Li B."/>
            <person name="Schilling B."/>
            <person name="Mooney S.D."/>
            <person name="Kahn C.R."/>
            <person name="Verdin E."/>
            <person name="Gibson B.W."/>
        </authorList>
    </citation>
    <scope>ACETYLATION [LARGE SCALE ANALYSIS] AT LYS-79</scope>
    <scope>IDENTIFICATION BY MASS SPECTROMETRY [LARGE SCALE ANALYSIS]</scope>
    <source>
        <tissue>Liver</tissue>
    </source>
</reference>
<protein>
    <recommendedName>
        <fullName evidence="7">17-beta-hydroxysteroid dehydrogenase 13</fullName>
        <shortName>17-beta-HSD 13</shortName>
        <ecNumber evidence="3">1.1.1.-</ecNumber>
        <ecNumber evidence="3">1.1.1.62</ecNumber>
    </recommendedName>
    <alternativeName>
        <fullName>Alcohol dehydrogenase PAN1B-like</fullName>
    </alternativeName>
    <alternativeName>
        <fullName evidence="3">Hepatic retinol/retinal dehydrogenase</fullName>
        <ecNumber evidence="3">1.1.1.105</ecNumber>
    </alternativeName>
    <alternativeName>
        <fullName evidence="3">Short-chain dehydrogenase/reductase 9</fullName>
    </alternativeName>
</protein>
<gene>
    <name type="primary">Hsd17b13</name>
    <name type="synonym">Scdr9</name>
</gene>
<accession>Q8VCR2</accession>
<accession>A8Y5N6</accession>
<accession>Q8CIU2</accession>
<keyword id="KW-0007">Acetylation</keyword>
<keyword id="KW-0025">Alternative splicing</keyword>
<keyword id="KW-0256">Endoplasmic reticulum</keyword>
<keyword id="KW-0551">Lipid droplet</keyword>
<keyword id="KW-0443">Lipid metabolism</keyword>
<keyword id="KW-0520">NAD</keyword>
<keyword id="KW-0560">Oxidoreductase</keyword>
<keyword id="KW-0597">Phosphoprotein</keyword>
<keyword id="KW-1185">Reference proteome</keyword>
<keyword id="KW-0732">Signal</keyword>
<name>DHB13_MOUSE</name>
<proteinExistence type="evidence at protein level"/>
<evidence type="ECO:0000250" key="1"/>
<evidence type="ECO:0000250" key="2">
    <source>
        <dbReference type="UniProtKB" id="Q5M875"/>
    </source>
</evidence>
<evidence type="ECO:0000250" key="3">
    <source>
        <dbReference type="UniProtKB" id="Q7Z5P4"/>
    </source>
</evidence>
<evidence type="ECO:0000255" key="4"/>
<evidence type="ECO:0000256" key="5">
    <source>
        <dbReference type="SAM" id="MobiDB-lite"/>
    </source>
</evidence>
<evidence type="ECO:0000269" key="6">
    <source>
    </source>
</evidence>
<evidence type="ECO:0000303" key="7">
    <source>
    </source>
</evidence>
<evidence type="ECO:0000303" key="8">
    <source ref="1"/>
</evidence>
<evidence type="ECO:0000305" key="9"/>
<evidence type="ECO:0000305" key="10">
    <source>
    </source>
</evidence>
<evidence type="ECO:0007744" key="11">
    <source>
    </source>
</evidence>